<keyword id="KW-0012">Acyltransferase</keyword>
<keyword id="KW-0963">Cytoplasm</keyword>
<keyword id="KW-0276">Fatty acid metabolism</keyword>
<keyword id="KW-0442">Lipid degradation</keyword>
<keyword id="KW-0443">Lipid metabolism</keyword>
<keyword id="KW-1185">Reference proteome</keyword>
<keyword id="KW-0808">Transferase</keyword>
<sequence>MRQALPLVTRQGDRIAIVSGLRTPFARQATAFHGIPAVDLGKMVVGELLARSEIPADAIEQLVFGQVVQMPEAPNIAREIVLGTGMNVHTDAYSVSRACATSFQAVANVAESLMAGTIRAGIAGGADSSSVLPIGVSKALARVLVDVNKARTTRQRLTLFSRLRLRDLLPVPPAVAEYSTGLRMGDTAEQMAKTYGITREQQDALAHRSHQRAAQAWAEGKLAEEVMTTYVPPYKNPFAEDNNIRGASTLADYAKLRPAFDRKHGSVTAANSTPLTDGAAAVILMTESRAKELGLRPLGYLRTYAFTAIDVWQDMLLGPAWSTPLALERAGLTMADLTLFDMHEAFAAQTLANLQLLGSERFAREVLGCAQATGEVDDAKFNVLGGSIAYGHPFAATGARMITQTLHELRRRGGGFGLVTACAAGGLGAAMVLEAE</sequence>
<organism>
    <name type="scientific">Salmonella typhimurium (strain LT2 / SGSC1412 / ATCC 700720)</name>
    <dbReference type="NCBI Taxonomy" id="99287"/>
    <lineage>
        <taxon>Bacteria</taxon>
        <taxon>Pseudomonadati</taxon>
        <taxon>Pseudomonadota</taxon>
        <taxon>Gammaproteobacteria</taxon>
        <taxon>Enterobacterales</taxon>
        <taxon>Enterobacteriaceae</taxon>
        <taxon>Salmonella</taxon>
    </lineage>
</organism>
<protein>
    <recommendedName>
        <fullName evidence="1">3-ketoacyl-CoA thiolase</fullName>
        <ecNumber evidence="1">2.3.1.16</ecNumber>
    </recommendedName>
    <alternativeName>
        <fullName evidence="1">ACSs</fullName>
    </alternativeName>
    <alternativeName>
        <fullName evidence="1">Acetyl-CoA acyltransferase</fullName>
    </alternativeName>
    <alternativeName>
        <fullName evidence="1">Acyl-CoA ligase</fullName>
    </alternativeName>
    <alternativeName>
        <fullName evidence="1">Beta-ketothiolase</fullName>
    </alternativeName>
    <alternativeName>
        <fullName evidence="1">Fatty acid oxidation complex subunit beta</fullName>
    </alternativeName>
</protein>
<gene>
    <name evidence="1" type="primary">fadI</name>
    <name type="ordered locus">STM2389</name>
</gene>
<accession>Q8ZNA6</accession>
<name>FADI_SALTY</name>
<comment type="function">
    <text evidence="1">Catalyzes the final step of fatty acid oxidation in which acetyl-CoA is released and the CoA ester of a fatty acid two carbons shorter is formed.</text>
</comment>
<comment type="catalytic activity">
    <reaction evidence="1">
        <text>an acyl-CoA + acetyl-CoA = a 3-oxoacyl-CoA + CoA</text>
        <dbReference type="Rhea" id="RHEA:21564"/>
        <dbReference type="ChEBI" id="CHEBI:57287"/>
        <dbReference type="ChEBI" id="CHEBI:57288"/>
        <dbReference type="ChEBI" id="CHEBI:58342"/>
        <dbReference type="ChEBI" id="CHEBI:90726"/>
        <dbReference type="EC" id="2.3.1.16"/>
    </reaction>
</comment>
<comment type="pathway">
    <text evidence="1">Lipid metabolism; fatty acid beta-oxidation.</text>
</comment>
<comment type="subunit">
    <text evidence="1">Heterotetramer of two alpha chains (FadJ) and two beta chains (FadI).</text>
</comment>
<comment type="subcellular location">
    <subcellularLocation>
        <location evidence="1">Cytoplasm</location>
    </subcellularLocation>
</comment>
<comment type="similarity">
    <text evidence="1">Belongs to the thiolase-like superfamily. Thiolase family.</text>
</comment>
<reference key="1">
    <citation type="journal article" date="2001" name="Nature">
        <title>Complete genome sequence of Salmonella enterica serovar Typhimurium LT2.</title>
        <authorList>
            <person name="McClelland M."/>
            <person name="Sanderson K.E."/>
            <person name="Spieth J."/>
            <person name="Clifton S.W."/>
            <person name="Latreille P."/>
            <person name="Courtney L."/>
            <person name="Porwollik S."/>
            <person name="Ali J."/>
            <person name="Dante M."/>
            <person name="Du F."/>
            <person name="Hou S."/>
            <person name="Layman D."/>
            <person name="Leonard S."/>
            <person name="Nguyen C."/>
            <person name="Scott K."/>
            <person name="Holmes A."/>
            <person name="Grewal N."/>
            <person name="Mulvaney E."/>
            <person name="Ryan E."/>
            <person name="Sun H."/>
            <person name="Florea L."/>
            <person name="Miller W."/>
            <person name="Stoneking T."/>
            <person name="Nhan M."/>
            <person name="Waterston R."/>
            <person name="Wilson R.K."/>
        </authorList>
    </citation>
    <scope>NUCLEOTIDE SEQUENCE [LARGE SCALE GENOMIC DNA]</scope>
    <source>
        <strain>LT2 / SGSC1412 / ATCC 700720</strain>
    </source>
</reference>
<dbReference type="EC" id="2.3.1.16" evidence="1"/>
<dbReference type="EMBL" id="AE006468">
    <property type="protein sequence ID" value="AAL21290.1"/>
    <property type="molecule type" value="Genomic_DNA"/>
</dbReference>
<dbReference type="SMR" id="Q8ZNA6"/>
<dbReference type="STRING" id="99287.STM2389"/>
<dbReference type="PaxDb" id="99287-STM2389"/>
<dbReference type="KEGG" id="stm:STM2389"/>
<dbReference type="PATRIC" id="fig|99287.12.peg.2528"/>
<dbReference type="HOGENOM" id="CLU_031026_2_0_6"/>
<dbReference type="PhylomeDB" id="Q8ZNA6"/>
<dbReference type="BioCyc" id="SENT99287:STM2389-MONOMER"/>
<dbReference type="UniPathway" id="UPA00659"/>
<dbReference type="Proteomes" id="UP000001014">
    <property type="component" value="Chromosome"/>
</dbReference>
<dbReference type="GO" id="GO:0005829">
    <property type="term" value="C:cytosol"/>
    <property type="evidence" value="ECO:0000318"/>
    <property type="project" value="GO_Central"/>
</dbReference>
<dbReference type="GO" id="GO:0003985">
    <property type="term" value="F:acetyl-CoA C-acetyltransferase activity"/>
    <property type="evidence" value="ECO:0000318"/>
    <property type="project" value="GO_Central"/>
</dbReference>
<dbReference type="GO" id="GO:0006635">
    <property type="term" value="P:fatty acid beta-oxidation"/>
    <property type="evidence" value="ECO:0007669"/>
    <property type="project" value="UniProtKB-UniRule"/>
</dbReference>
<dbReference type="CDD" id="cd00751">
    <property type="entry name" value="thiolase"/>
    <property type="match status" value="1"/>
</dbReference>
<dbReference type="FunFam" id="3.40.47.10:FF:000011">
    <property type="entry name" value="3-ketoacyl-CoA thiolase"/>
    <property type="match status" value="1"/>
</dbReference>
<dbReference type="Gene3D" id="3.40.47.10">
    <property type="match status" value="1"/>
</dbReference>
<dbReference type="HAMAP" id="MF_01618">
    <property type="entry name" value="FadI"/>
    <property type="match status" value="1"/>
</dbReference>
<dbReference type="InterPro" id="IPR012806">
    <property type="entry name" value="Ac-CoA_C-AcTrfase_FadI"/>
</dbReference>
<dbReference type="InterPro" id="IPR002155">
    <property type="entry name" value="Thiolase"/>
</dbReference>
<dbReference type="InterPro" id="IPR016039">
    <property type="entry name" value="Thiolase-like"/>
</dbReference>
<dbReference type="InterPro" id="IPR020615">
    <property type="entry name" value="Thiolase_acyl_enz_int_AS"/>
</dbReference>
<dbReference type="InterPro" id="IPR020610">
    <property type="entry name" value="Thiolase_AS"/>
</dbReference>
<dbReference type="InterPro" id="IPR020617">
    <property type="entry name" value="Thiolase_C"/>
</dbReference>
<dbReference type="InterPro" id="IPR020613">
    <property type="entry name" value="Thiolase_CS"/>
</dbReference>
<dbReference type="InterPro" id="IPR020616">
    <property type="entry name" value="Thiolase_N"/>
</dbReference>
<dbReference type="NCBIfam" id="TIGR01930">
    <property type="entry name" value="AcCoA-C-Actrans"/>
    <property type="match status" value="1"/>
</dbReference>
<dbReference type="NCBIfam" id="TIGR02446">
    <property type="entry name" value="FadI"/>
    <property type="match status" value="1"/>
</dbReference>
<dbReference type="NCBIfam" id="NF006516">
    <property type="entry name" value="PRK08963.1"/>
    <property type="match status" value="1"/>
</dbReference>
<dbReference type="PANTHER" id="PTHR18919:SF107">
    <property type="entry name" value="ACETYL-COA ACETYLTRANSFERASE, CYTOSOLIC"/>
    <property type="match status" value="1"/>
</dbReference>
<dbReference type="PANTHER" id="PTHR18919">
    <property type="entry name" value="ACETYL-COA C-ACYLTRANSFERASE"/>
    <property type="match status" value="1"/>
</dbReference>
<dbReference type="Pfam" id="PF02803">
    <property type="entry name" value="Thiolase_C"/>
    <property type="match status" value="1"/>
</dbReference>
<dbReference type="Pfam" id="PF00108">
    <property type="entry name" value="Thiolase_N"/>
    <property type="match status" value="1"/>
</dbReference>
<dbReference type="PIRSF" id="PIRSF000429">
    <property type="entry name" value="Ac-CoA_Ac_transf"/>
    <property type="match status" value="1"/>
</dbReference>
<dbReference type="SUPFAM" id="SSF53901">
    <property type="entry name" value="Thiolase-like"/>
    <property type="match status" value="2"/>
</dbReference>
<dbReference type="PROSITE" id="PS00098">
    <property type="entry name" value="THIOLASE_1"/>
    <property type="match status" value="1"/>
</dbReference>
<dbReference type="PROSITE" id="PS00737">
    <property type="entry name" value="THIOLASE_2"/>
    <property type="match status" value="1"/>
</dbReference>
<dbReference type="PROSITE" id="PS00099">
    <property type="entry name" value="THIOLASE_3"/>
    <property type="match status" value="1"/>
</dbReference>
<evidence type="ECO:0000255" key="1">
    <source>
        <dbReference type="HAMAP-Rule" id="MF_01618"/>
    </source>
</evidence>
<feature type="chain" id="PRO_0000206446" description="3-ketoacyl-CoA thiolase">
    <location>
        <begin position="1"/>
        <end position="436"/>
    </location>
</feature>
<feature type="active site" description="Acyl-thioester intermediate" evidence="1">
    <location>
        <position position="99"/>
    </location>
</feature>
<feature type="active site" description="Proton acceptor" evidence="1">
    <location>
        <position position="392"/>
    </location>
</feature>
<feature type="active site" description="Proton acceptor" evidence="1">
    <location>
        <position position="422"/>
    </location>
</feature>
<proteinExistence type="inferred from homology"/>